<reference key="1">
    <citation type="journal article" date="1999" name="Nature">
        <title>Sequence and analysis of chromosome 2 of the plant Arabidopsis thaliana.</title>
        <authorList>
            <person name="Lin X."/>
            <person name="Kaul S."/>
            <person name="Rounsley S.D."/>
            <person name="Shea T.P."/>
            <person name="Benito M.-I."/>
            <person name="Town C.D."/>
            <person name="Fujii C.Y."/>
            <person name="Mason T.M."/>
            <person name="Bowman C.L."/>
            <person name="Barnstead M.E."/>
            <person name="Feldblyum T.V."/>
            <person name="Buell C.R."/>
            <person name="Ketchum K.A."/>
            <person name="Lee J.J."/>
            <person name="Ronning C.M."/>
            <person name="Koo H.L."/>
            <person name="Moffat K.S."/>
            <person name="Cronin L.A."/>
            <person name="Shen M."/>
            <person name="Pai G."/>
            <person name="Van Aken S."/>
            <person name="Umayam L."/>
            <person name="Tallon L.J."/>
            <person name="Gill J.E."/>
            <person name="Adams M.D."/>
            <person name="Carrera A.J."/>
            <person name="Creasy T.H."/>
            <person name="Goodman H.M."/>
            <person name="Somerville C.R."/>
            <person name="Copenhaver G.P."/>
            <person name="Preuss D."/>
            <person name="Nierman W.C."/>
            <person name="White O."/>
            <person name="Eisen J.A."/>
            <person name="Salzberg S.L."/>
            <person name="Fraser C.M."/>
            <person name="Venter J.C."/>
        </authorList>
    </citation>
    <scope>NUCLEOTIDE SEQUENCE [LARGE SCALE GENOMIC DNA]</scope>
    <source>
        <strain>cv. Columbia</strain>
    </source>
</reference>
<reference key="2">
    <citation type="journal article" date="2017" name="Plant J.">
        <title>Araport11: a complete reannotation of the Arabidopsis thaliana reference genome.</title>
        <authorList>
            <person name="Cheng C.Y."/>
            <person name="Krishnakumar V."/>
            <person name="Chan A.P."/>
            <person name="Thibaud-Nissen F."/>
            <person name="Schobel S."/>
            <person name="Town C.D."/>
        </authorList>
    </citation>
    <scope>GENOME REANNOTATION</scope>
    <source>
        <strain>cv. Columbia</strain>
    </source>
</reference>
<reference key="3">
    <citation type="journal article" date="2004" name="Genome Res.">
        <title>Whole genome sequence comparisons and 'full-length' cDNA sequences: a combined approach to evaluate and improve Arabidopsis genome annotation.</title>
        <authorList>
            <person name="Castelli V."/>
            <person name="Aury J.-M."/>
            <person name="Jaillon O."/>
            <person name="Wincker P."/>
            <person name="Clepet C."/>
            <person name="Menard M."/>
            <person name="Cruaud C."/>
            <person name="Quetier F."/>
            <person name="Scarpelli C."/>
            <person name="Schaechter V."/>
            <person name="Temple G."/>
            <person name="Caboche M."/>
            <person name="Weissenbach J."/>
            <person name="Salanoubat M."/>
        </authorList>
    </citation>
    <scope>NUCLEOTIDE SEQUENCE [LARGE SCALE MRNA]</scope>
    <source>
        <strain>cv. Columbia</strain>
    </source>
</reference>
<reference key="4">
    <citation type="journal article" date="2007" name="Plant Physiol.">
        <title>Genome-wide analysis of the core DNA replication machinery in the higher plants Arabidopsis and rice.</title>
        <authorList>
            <person name="Shultz R.W."/>
            <person name="Tatineni V.M."/>
            <person name="Hanley-Bowdoin L."/>
            <person name="Thompson W.F."/>
        </authorList>
    </citation>
    <scope>GENE FAMILY</scope>
</reference>
<reference key="5">
    <citation type="journal article" date="2008" name="EMBO J.">
        <title>The DNA replication checkpoint aids survival of plants deficient in the novel replisome factor ETG1.</title>
        <authorList>
            <person name="Takahashi N."/>
            <person name="Lammens T."/>
            <person name="Boudolf V."/>
            <person name="Maes S."/>
            <person name="Yoshizumi T."/>
            <person name="De Jaeger G."/>
            <person name="Witters E."/>
            <person name="Inze D."/>
            <person name="De Veylder L."/>
        </authorList>
    </citation>
    <scope>SUBUNIT</scope>
    <scope>INTERACTION WITH ETG1</scope>
    <scope>SUBCELLULAR LOCATION</scope>
</reference>
<reference key="6">
    <citation type="journal article" date="2009" name="Plant Physiol.">
        <title>Dynamic localization of the DNA replication proteins MCM5 and MCM7 in plants.</title>
        <authorList>
            <person name="Shultz R.W."/>
            <person name="Lee T.J."/>
            <person name="Allen G.C."/>
            <person name="Thompson W.F."/>
            <person name="Hanley-Bowdoin L."/>
        </authorList>
    </citation>
    <scope>SUBCELLULAR LOCATION</scope>
    <scope>TISSUE SPECIFICITY</scope>
</reference>
<evidence type="ECO:0000250" key="1"/>
<evidence type="ECO:0000269" key="2">
    <source>
    </source>
</evidence>
<evidence type="ECO:0000269" key="3">
    <source>
    </source>
</evidence>
<evidence type="ECO:0000305" key="4"/>
<sequence length="727" mass="81015">MSGWDEGAVYYSDQPQFPEAGDAATISPHAVLTKFKEFIRNFEIEQNCFPYREALLDNPKRLVVHLEDLLSFDSDLPSLIRSAPADYLPVFEKAAGEVLTGLKMREANEGGVMEEPLTRDVQILLTSREDPVSMRLLGAQYISKLVKISGISIAASRVKAKATYVFLVCKNCKKTREVPCRPGLGGAIVPRSCDNIPQPGEEPCPLDPWMVVPDRSQYVDQQTLKLQENPEDVPTGELPRNMLLSVDRHLVQTIVPGTRLTVMGIYSIFQASSSSNSHKGAVAIRQPYIRVVGLEDTNEASSRGPANFTPDEEEEFKKFADSQDVYKNICTKIAPSIFGHEDVKRAAACLLFGGSRKSLPDGVKLRGDINVLLLGDPSTAKSQFLKFVEKTAPIAVYTSGKGSSAAGLTASVIRDSSTREFYLEGGAMVLADGGVVCIDEFDKMRPEDRVAIHEAMEQQTISIAKAGITTVLNSRTSVLAAANPPSGRYDDLKTAQDNIDLQTTILSRFDLIFIVKDIRKYSQDKEIASHIIRVHASANKFSDENTDSKEDNWLKRYIQYCRARCHPRLSKDAAENLQRKYVTIRMDMKRRAHETGEAAPIPITVRQLEAIVRLSESLAKMRLSHEATPDDVDKAFKLFDTSTMDAARSGINQQINITGEMANEIKQAETQIKRRMGIGARLSERRLIEDLARMGMNDSMVRRALLIMHQRGEVEYQRERRSIVRKA</sequence>
<accession>O80786</accession>
<proteinExistence type="evidence at protein level"/>
<gene>
    <name type="primary">MCM5</name>
    <name type="ordered locus">At2g07690</name>
    <name type="ORF">T12J2</name>
</gene>
<organism>
    <name type="scientific">Arabidopsis thaliana</name>
    <name type="common">Mouse-ear cress</name>
    <dbReference type="NCBI Taxonomy" id="3702"/>
    <lineage>
        <taxon>Eukaryota</taxon>
        <taxon>Viridiplantae</taxon>
        <taxon>Streptophyta</taxon>
        <taxon>Embryophyta</taxon>
        <taxon>Tracheophyta</taxon>
        <taxon>Spermatophyta</taxon>
        <taxon>Magnoliopsida</taxon>
        <taxon>eudicotyledons</taxon>
        <taxon>Gunneridae</taxon>
        <taxon>Pentapetalae</taxon>
        <taxon>rosids</taxon>
        <taxon>malvids</taxon>
        <taxon>Brassicales</taxon>
        <taxon>Brassicaceae</taxon>
        <taxon>Camelineae</taxon>
        <taxon>Arabidopsis</taxon>
    </lineage>
</organism>
<name>MCM5_ARATH</name>
<dbReference type="EC" id="3.6.4.12"/>
<dbReference type="EMBL" id="AC004483">
    <property type="protein sequence ID" value="AAC26671.1"/>
    <property type="molecule type" value="Genomic_DNA"/>
</dbReference>
<dbReference type="EMBL" id="CP002685">
    <property type="protein sequence ID" value="AEC06128.1"/>
    <property type="molecule type" value="Genomic_DNA"/>
</dbReference>
<dbReference type="EMBL" id="BX820823">
    <property type="status" value="NOT_ANNOTATED_CDS"/>
    <property type="molecule type" value="mRNA"/>
</dbReference>
<dbReference type="PIR" id="G84487">
    <property type="entry name" value="G84487"/>
</dbReference>
<dbReference type="RefSeq" id="NP_178812.1">
    <molecule id="O80786-1"/>
    <property type="nucleotide sequence ID" value="NM_126771.6"/>
</dbReference>
<dbReference type="SMR" id="O80786"/>
<dbReference type="BioGRID" id="804">
    <property type="interactions" value="12"/>
</dbReference>
<dbReference type="FunCoup" id="O80786">
    <property type="interactions" value="3246"/>
</dbReference>
<dbReference type="IntAct" id="O80786">
    <property type="interactions" value="2"/>
</dbReference>
<dbReference type="MINT" id="O80786"/>
<dbReference type="STRING" id="3702.O80786"/>
<dbReference type="PaxDb" id="3702-AT2G07690.1"/>
<dbReference type="ProteomicsDB" id="238242">
    <molecule id="O80786-1"/>
</dbReference>
<dbReference type="EnsemblPlants" id="AT2G07690.1">
    <molecule id="O80786-1"/>
    <property type="protein sequence ID" value="AT2G07690.1"/>
    <property type="gene ID" value="AT2G07690"/>
</dbReference>
<dbReference type="GeneID" id="815415"/>
<dbReference type="Gramene" id="AT2G07690.1">
    <molecule id="O80786-1"/>
    <property type="protein sequence ID" value="AT2G07690.1"/>
    <property type="gene ID" value="AT2G07690"/>
</dbReference>
<dbReference type="KEGG" id="ath:AT2G07690"/>
<dbReference type="Araport" id="AT2G07690"/>
<dbReference type="TAIR" id="AT2G07690">
    <property type="gene designation" value="MCM5"/>
</dbReference>
<dbReference type="eggNOG" id="KOG0481">
    <property type="taxonomic scope" value="Eukaryota"/>
</dbReference>
<dbReference type="InParanoid" id="O80786"/>
<dbReference type="OMA" id="ITYCKTR"/>
<dbReference type="PhylomeDB" id="O80786"/>
<dbReference type="CD-CODE" id="4299E36E">
    <property type="entry name" value="Nucleolus"/>
</dbReference>
<dbReference type="PRO" id="PR:O80786"/>
<dbReference type="Proteomes" id="UP000006548">
    <property type="component" value="Chromosome 2"/>
</dbReference>
<dbReference type="ExpressionAtlas" id="O80786">
    <property type="expression patterns" value="baseline and differential"/>
</dbReference>
<dbReference type="GO" id="GO:0005737">
    <property type="term" value="C:cytoplasm"/>
    <property type="evidence" value="ECO:0000314"/>
    <property type="project" value="TAIR"/>
</dbReference>
<dbReference type="GO" id="GO:0042555">
    <property type="term" value="C:MCM complex"/>
    <property type="evidence" value="ECO:0007669"/>
    <property type="project" value="InterPro"/>
</dbReference>
<dbReference type="GO" id="GO:0005634">
    <property type="term" value="C:nucleus"/>
    <property type="evidence" value="ECO:0000314"/>
    <property type="project" value="TAIR"/>
</dbReference>
<dbReference type="GO" id="GO:0000347">
    <property type="term" value="C:THO complex"/>
    <property type="evidence" value="ECO:0000314"/>
    <property type="project" value="UniProtKB"/>
</dbReference>
<dbReference type="GO" id="GO:0005524">
    <property type="term" value="F:ATP binding"/>
    <property type="evidence" value="ECO:0007669"/>
    <property type="project" value="UniProtKB-KW"/>
</dbReference>
<dbReference type="GO" id="GO:0016887">
    <property type="term" value="F:ATP hydrolysis activity"/>
    <property type="evidence" value="ECO:0007669"/>
    <property type="project" value="RHEA"/>
</dbReference>
<dbReference type="GO" id="GO:0003688">
    <property type="term" value="F:DNA replication origin binding"/>
    <property type="evidence" value="ECO:0007669"/>
    <property type="project" value="InterPro"/>
</dbReference>
<dbReference type="GO" id="GO:0004386">
    <property type="term" value="F:helicase activity"/>
    <property type="evidence" value="ECO:0007669"/>
    <property type="project" value="UniProtKB-KW"/>
</dbReference>
<dbReference type="GO" id="GO:0006270">
    <property type="term" value="P:DNA replication initiation"/>
    <property type="evidence" value="ECO:0007669"/>
    <property type="project" value="InterPro"/>
</dbReference>
<dbReference type="CDD" id="cd17756">
    <property type="entry name" value="MCM5"/>
    <property type="match status" value="1"/>
</dbReference>
<dbReference type="FunFam" id="2.20.28.10:FF:000005">
    <property type="entry name" value="DNA helicase"/>
    <property type="match status" value="1"/>
</dbReference>
<dbReference type="FunFam" id="3.30.1640.10:FF:000016">
    <property type="entry name" value="DNA helicase"/>
    <property type="match status" value="1"/>
</dbReference>
<dbReference type="FunFam" id="3.40.50.300:FF:000929">
    <property type="entry name" value="DNA helicase"/>
    <property type="match status" value="1"/>
</dbReference>
<dbReference type="Gene3D" id="2.20.28.10">
    <property type="match status" value="1"/>
</dbReference>
<dbReference type="Gene3D" id="3.30.1640.10">
    <property type="entry name" value="mini-chromosome maintenance (MCM) complex, chain A, domain 1"/>
    <property type="match status" value="1"/>
</dbReference>
<dbReference type="Gene3D" id="2.40.50.140">
    <property type="entry name" value="Nucleic acid-binding proteins"/>
    <property type="match status" value="1"/>
</dbReference>
<dbReference type="Gene3D" id="3.40.50.300">
    <property type="entry name" value="P-loop containing nucleotide triphosphate hydrolases"/>
    <property type="match status" value="1"/>
</dbReference>
<dbReference type="InterPro" id="IPR031327">
    <property type="entry name" value="MCM"/>
</dbReference>
<dbReference type="InterPro" id="IPR008048">
    <property type="entry name" value="MCM5"/>
</dbReference>
<dbReference type="InterPro" id="IPR054125">
    <property type="entry name" value="MCM5_C"/>
</dbReference>
<dbReference type="InterPro" id="IPR018525">
    <property type="entry name" value="MCM_CS"/>
</dbReference>
<dbReference type="InterPro" id="IPR001208">
    <property type="entry name" value="MCM_dom"/>
</dbReference>
<dbReference type="InterPro" id="IPR041562">
    <property type="entry name" value="MCM_lid"/>
</dbReference>
<dbReference type="InterPro" id="IPR027925">
    <property type="entry name" value="MCM_N"/>
</dbReference>
<dbReference type="InterPro" id="IPR033762">
    <property type="entry name" value="MCM_OB"/>
</dbReference>
<dbReference type="InterPro" id="IPR012340">
    <property type="entry name" value="NA-bd_OB-fold"/>
</dbReference>
<dbReference type="InterPro" id="IPR027417">
    <property type="entry name" value="P-loop_NTPase"/>
</dbReference>
<dbReference type="PANTHER" id="PTHR11630">
    <property type="entry name" value="DNA REPLICATION LICENSING FACTOR MCM FAMILY MEMBER"/>
    <property type="match status" value="1"/>
</dbReference>
<dbReference type="PANTHER" id="PTHR11630:SF42">
    <property type="entry name" value="DNA REPLICATION LICENSING FACTOR MCM5"/>
    <property type="match status" value="1"/>
</dbReference>
<dbReference type="Pfam" id="PF00493">
    <property type="entry name" value="MCM"/>
    <property type="match status" value="1"/>
</dbReference>
<dbReference type="Pfam" id="PF21933">
    <property type="entry name" value="MCM5_C"/>
    <property type="match status" value="1"/>
</dbReference>
<dbReference type="Pfam" id="PF17855">
    <property type="entry name" value="MCM_lid"/>
    <property type="match status" value="1"/>
</dbReference>
<dbReference type="Pfam" id="PF14551">
    <property type="entry name" value="MCM_N"/>
    <property type="match status" value="1"/>
</dbReference>
<dbReference type="Pfam" id="PF17207">
    <property type="entry name" value="MCM_OB"/>
    <property type="match status" value="1"/>
</dbReference>
<dbReference type="PRINTS" id="PR01657">
    <property type="entry name" value="MCMFAMILY"/>
</dbReference>
<dbReference type="PRINTS" id="PR01661">
    <property type="entry name" value="MCMPROTEIN5"/>
</dbReference>
<dbReference type="SMART" id="SM00350">
    <property type="entry name" value="MCM"/>
    <property type="match status" value="1"/>
</dbReference>
<dbReference type="SUPFAM" id="SSF50249">
    <property type="entry name" value="Nucleic acid-binding proteins"/>
    <property type="match status" value="1"/>
</dbReference>
<dbReference type="SUPFAM" id="SSF52540">
    <property type="entry name" value="P-loop containing nucleoside triphosphate hydrolases"/>
    <property type="match status" value="1"/>
</dbReference>
<dbReference type="PROSITE" id="PS00847">
    <property type="entry name" value="MCM_1"/>
    <property type="match status" value="1"/>
</dbReference>
<dbReference type="PROSITE" id="PS50051">
    <property type="entry name" value="MCM_2"/>
    <property type="match status" value="1"/>
</dbReference>
<protein>
    <recommendedName>
        <fullName>DNA replication licensing factor MCM5</fullName>
        <ecNumber>3.6.4.12</ecNumber>
    </recommendedName>
    <alternativeName>
        <fullName>Minichromosome maintenance protein 5</fullName>
        <shortName>AtMCM5</shortName>
    </alternativeName>
</protein>
<feature type="chain" id="PRO_0000425993" description="DNA replication licensing factor MCM5">
    <location>
        <begin position="1"/>
        <end position="727"/>
    </location>
</feature>
<feature type="domain" description="MCM">
    <location>
        <begin position="325"/>
        <end position="531"/>
    </location>
</feature>
<feature type="short sequence motif" description="Arginine finger">
    <location>
        <begin position="507"/>
        <end position="510"/>
    </location>
</feature>
<feature type="binding site" evidence="1">
    <location>
        <begin position="375"/>
        <end position="382"/>
    </location>
    <ligand>
        <name>ATP</name>
        <dbReference type="ChEBI" id="CHEBI:30616"/>
    </ligand>
</feature>
<comment type="function">
    <text evidence="1">Probable component of the MCM2-7 complex (MCM complex) that may function as a DNA helicase and which is essential to undergo a single round of replication initiation and elongation per cell cycle in eukaryotic cells.</text>
</comment>
<comment type="catalytic activity">
    <reaction>
        <text>ATP + H2O = ADP + phosphate + H(+)</text>
        <dbReference type="Rhea" id="RHEA:13065"/>
        <dbReference type="ChEBI" id="CHEBI:15377"/>
        <dbReference type="ChEBI" id="CHEBI:15378"/>
        <dbReference type="ChEBI" id="CHEBI:30616"/>
        <dbReference type="ChEBI" id="CHEBI:43474"/>
        <dbReference type="ChEBI" id="CHEBI:456216"/>
        <dbReference type="EC" id="3.6.4.12"/>
    </reaction>
</comment>
<comment type="subunit">
    <text evidence="2">Component of the minichromosome maintenance (MCM) complex, a heterotetramer composed of MCM2, MCM3, MCM4, MCM5, MCM6 and MCM7. Interacts with EGT1.</text>
</comment>
<comment type="interaction">
    <interactant intactId="EBI-2131365">
        <id>O80786</id>
    </interactant>
    <interactant intactId="EBI-2131354">
        <id>Q501D5</id>
        <label>ETG1</label>
    </interactant>
    <organismsDiffer>false</organismsDiffer>
    <experiments>5</experiments>
</comment>
<comment type="subcellular location">
    <subcellularLocation>
        <location>Nucleus</location>
    </subcellularLocation>
    <subcellularLocation>
        <location>Cytoplasm</location>
    </subcellularLocation>
    <text>Localized in the nucleus during G1, S and G2 phases of the cell cycle, and released into the cytoplasmic compartment during mitosis.</text>
</comment>
<comment type="alternative products">
    <event type="alternative splicing"/>
    <isoform>
        <id>O80786-1</id>
        <name>1</name>
        <sequence type="displayed"/>
    </isoform>
    <text>A number of isoforms are produced. According to EST sequences.</text>
</comment>
<comment type="tissue specificity">
    <text evidence="3">Expressed in shoot apex and flower buds.</text>
</comment>
<comment type="similarity">
    <text evidence="4">Belongs to the MCM family.</text>
</comment>
<comment type="sequence caution" evidence="4">
    <conflict type="miscellaneous discrepancy">
        <sequence resource="EMBL" id="BX820823"/>
    </conflict>
    <text>Sequencing errors.</text>
</comment>
<keyword id="KW-0025">Alternative splicing</keyword>
<keyword id="KW-0067">ATP-binding</keyword>
<keyword id="KW-0131">Cell cycle</keyword>
<keyword id="KW-0963">Cytoplasm</keyword>
<keyword id="KW-0235">DNA replication</keyword>
<keyword id="KW-0238">DNA-binding</keyword>
<keyword id="KW-0347">Helicase</keyword>
<keyword id="KW-0378">Hydrolase</keyword>
<keyword id="KW-0547">Nucleotide-binding</keyword>
<keyword id="KW-0539">Nucleus</keyword>
<keyword id="KW-1185">Reference proteome</keyword>